<comment type="function">
    <text evidence="1">This protein is one of the early assembly proteins of the 50S ribosomal subunit, although it is not seen to bind rRNA by itself. It is important during the early stages of 50S assembly.</text>
</comment>
<comment type="subunit">
    <text evidence="1">Part of the 50S ribosomal subunit.</text>
</comment>
<comment type="similarity">
    <text evidence="1">Belongs to the universal ribosomal protein uL13 family.</text>
</comment>
<proteinExistence type="inferred from homology"/>
<gene>
    <name evidence="1" type="primary">rplM</name>
    <name type="ordered locus">SeSA_A3537</name>
</gene>
<dbReference type="EMBL" id="CP001127">
    <property type="protein sequence ID" value="ACF92423.1"/>
    <property type="molecule type" value="Genomic_DNA"/>
</dbReference>
<dbReference type="RefSeq" id="WP_000847559.1">
    <property type="nucleotide sequence ID" value="NC_011094.1"/>
</dbReference>
<dbReference type="SMR" id="B4TWJ5"/>
<dbReference type="GeneID" id="89518067"/>
<dbReference type="KEGG" id="sew:SeSA_A3537"/>
<dbReference type="HOGENOM" id="CLU_082184_2_2_6"/>
<dbReference type="Proteomes" id="UP000001865">
    <property type="component" value="Chromosome"/>
</dbReference>
<dbReference type="GO" id="GO:0022625">
    <property type="term" value="C:cytosolic large ribosomal subunit"/>
    <property type="evidence" value="ECO:0007669"/>
    <property type="project" value="TreeGrafter"/>
</dbReference>
<dbReference type="GO" id="GO:0003729">
    <property type="term" value="F:mRNA binding"/>
    <property type="evidence" value="ECO:0007669"/>
    <property type="project" value="TreeGrafter"/>
</dbReference>
<dbReference type="GO" id="GO:0003735">
    <property type="term" value="F:structural constituent of ribosome"/>
    <property type="evidence" value="ECO:0007669"/>
    <property type="project" value="InterPro"/>
</dbReference>
<dbReference type="GO" id="GO:0017148">
    <property type="term" value="P:negative regulation of translation"/>
    <property type="evidence" value="ECO:0007669"/>
    <property type="project" value="TreeGrafter"/>
</dbReference>
<dbReference type="GO" id="GO:0006412">
    <property type="term" value="P:translation"/>
    <property type="evidence" value="ECO:0007669"/>
    <property type="project" value="UniProtKB-UniRule"/>
</dbReference>
<dbReference type="CDD" id="cd00392">
    <property type="entry name" value="Ribosomal_L13"/>
    <property type="match status" value="1"/>
</dbReference>
<dbReference type="FunFam" id="3.90.1180.10:FF:000001">
    <property type="entry name" value="50S ribosomal protein L13"/>
    <property type="match status" value="1"/>
</dbReference>
<dbReference type="Gene3D" id="3.90.1180.10">
    <property type="entry name" value="Ribosomal protein L13"/>
    <property type="match status" value="1"/>
</dbReference>
<dbReference type="HAMAP" id="MF_01366">
    <property type="entry name" value="Ribosomal_uL13"/>
    <property type="match status" value="1"/>
</dbReference>
<dbReference type="InterPro" id="IPR005822">
    <property type="entry name" value="Ribosomal_uL13"/>
</dbReference>
<dbReference type="InterPro" id="IPR005823">
    <property type="entry name" value="Ribosomal_uL13_bac-type"/>
</dbReference>
<dbReference type="InterPro" id="IPR023563">
    <property type="entry name" value="Ribosomal_uL13_CS"/>
</dbReference>
<dbReference type="InterPro" id="IPR036899">
    <property type="entry name" value="Ribosomal_uL13_sf"/>
</dbReference>
<dbReference type="NCBIfam" id="TIGR01066">
    <property type="entry name" value="rplM_bact"/>
    <property type="match status" value="1"/>
</dbReference>
<dbReference type="PANTHER" id="PTHR11545:SF2">
    <property type="entry name" value="LARGE RIBOSOMAL SUBUNIT PROTEIN UL13M"/>
    <property type="match status" value="1"/>
</dbReference>
<dbReference type="PANTHER" id="PTHR11545">
    <property type="entry name" value="RIBOSOMAL PROTEIN L13"/>
    <property type="match status" value="1"/>
</dbReference>
<dbReference type="Pfam" id="PF00572">
    <property type="entry name" value="Ribosomal_L13"/>
    <property type="match status" value="1"/>
</dbReference>
<dbReference type="PIRSF" id="PIRSF002181">
    <property type="entry name" value="Ribosomal_L13"/>
    <property type="match status" value="1"/>
</dbReference>
<dbReference type="SUPFAM" id="SSF52161">
    <property type="entry name" value="Ribosomal protein L13"/>
    <property type="match status" value="1"/>
</dbReference>
<dbReference type="PROSITE" id="PS00783">
    <property type="entry name" value="RIBOSOMAL_L13"/>
    <property type="match status" value="1"/>
</dbReference>
<reference key="1">
    <citation type="journal article" date="2011" name="J. Bacteriol.">
        <title>Comparative genomics of 28 Salmonella enterica isolates: evidence for CRISPR-mediated adaptive sublineage evolution.</title>
        <authorList>
            <person name="Fricke W.F."/>
            <person name="Mammel M.K."/>
            <person name="McDermott P.F."/>
            <person name="Tartera C."/>
            <person name="White D.G."/>
            <person name="Leclerc J.E."/>
            <person name="Ravel J."/>
            <person name="Cebula T.A."/>
        </authorList>
    </citation>
    <scope>NUCLEOTIDE SEQUENCE [LARGE SCALE GENOMIC DNA]</scope>
    <source>
        <strain>CVM19633</strain>
    </source>
</reference>
<protein>
    <recommendedName>
        <fullName evidence="1">Large ribosomal subunit protein uL13</fullName>
    </recommendedName>
    <alternativeName>
        <fullName evidence="2">50S ribosomal protein L13</fullName>
    </alternativeName>
</protein>
<feature type="chain" id="PRO_1000144180" description="Large ribosomal subunit protein uL13">
    <location>
        <begin position="1"/>
        <end position="142"/>
    </location>
</feature>
<evidence type="ECO:0000255" key="1">
    <source>
        <dbReference type="HAMAP-Rule" id="MF_01366"/>
    </source>
</evidence>
<evidence type="ECO:0000305" key="2"/>
<keyword id="KW-0687">Ribonucleoprotein</keyword>
<keyword id="KW-0689">Ribosomal protein</keyword>
<organism>
    <name type="scientific">Salmonella schwarzengrund (strain CVM19633)</name>
    <dbReference type="NCBI Taxonomy" id="439843"/>
    <lineage>
        <taxon>Bacteria</taxon>
        <taxon>Pseudomonadati</taxon>
        <taxon>Pseudomonadota</taxon>
        <taxon>Gammaproteobacteria</taxon>
        <taxon>Enterobacterales</taxon>
        <taxon>Enterobacteriaceae</taxon>
        <taxon>Salmonella</taxon>
    </lineage>
</organism>
<sequence length="142" mass="16019">MKTFTAKPETVKRDWYVVDATGKTLGRLATELARRLRGKHKAEYTPHVDTGDYIIVLNADKVAVTGNKRTDKVYYHHTGHIGGIKQATFEEMIARRPERVIEIAVKGMLPKGPLGRAMFRKLKVYAGNEHNHAAQQPQVLDI</sequence>
<accession>B4TWJ5</accession>
<name>RL13_SALSV</name>